<comment type="function">
    <text evidence="2">Involved in nucleolar processing of pre-18S ribosomal RNA.</text>
</comment>
<comment type="subunit">
    <text evidence="2">Interacts with snoRNA U3. Interacts with MPP10. Component of the ribosomal small subunit (SSU) processome composed of at least 40 protein subunits and snoRNA U3.</text>
</comment>
<comment type="interaction">
    <interactant intactId="EBI-22597">
        <id>P40055</id>
    </interactant>
    <interactant intactId="EBI-1884">
        <id>P42945</id>
        <label>UTP10</label>
    </interactant>
    <organismsDiffer>false</organismsDiffer>
    <experiments>7</experiments>
</comment>
<comment type="subcellular location">
    <subcellularLocation>
        <location evidence="2">Nucleus</location>
        <location evidence="2">Nucleolus</location>
    </subcellularLocation>
</comment>
<comment type="miscellaneous">
    <text evidence="3">Present with 5800 molecules/cell in log phase SD medium.</text>
</comment>
<evidence type="ECO:0000256" key="1">
    <source>
        <dbReference type="SAM" id="MobiDB-lite"/>
    </source>
</evidence>
<evidence type="ECO:0000269" key="2">
    <source>
    </source>
</evidence>
<evidence type="ECO:0000269" key="3">
    <source>
    </source>
</evidence>
<sequence length="554" mass="62317">MGHKKNGHRRQIKERENQNKFERSTYTNNAKNNHTQTKDKKLRAGLKKIDEQYKKAVSSAAATDYLLPESNGYLEPENELEKTFKVQQSEIKSSVDVSTANKALDLSLKEFGPYHIKYAKNGTHLLITGRKGHVASMDWRKGQLRAELFLNETCHSATYLQNEQYFAVAQKKYTFIYDHEGTELHRLKQHIEARHLDFLPYHYLLVTAGETGWLKYHDVSTGQLVSELRTKAGPTMAMAQNPWNAVMHLGHSNGTVSLWSPSMPEPLVKLLSARGPVNSIAIDRSGYYMATTGADRSMKIWDIRNFKQLHSVESLPTPGTNVSISDTGLLALSRGPHVTLWKDALKLSGDSKPCFGSMGGNPHRNTPYMSHLFAGNKVENLGFVPFEDLLGVGHQTGITNLIVPGAGEANYDALELNPFETKKQRQEQEVRTLLNKLPADTITLDPNSIGSVDKRSSTIRLNAKDLAQTTMDANNKAKTNSDIPDVKPDVKGKNSGLRSFLRKKTQNVIDERKLRVQKQLDKEKNIRKRNHQIKQGLISEDHKDVIEEALSRFG</sequence>
<reference key="1">
    <citation type="journal article" date="1997" name="Nature">
        <title>The nucleotide sequence of Saccharomyces cerevisiae chromosome V.</title>
        <authorList>
            <person name="Dietrich F.S."/>
            <person name="Mulligan J.T."/>
            <person name="Hennessy K.M."/>
            <person name="Yelton M.A."/>
            <person name="Allen E."/>
            <person name="Araujo R."/>
            <person name="Aviles E."/>
            <person name="Berno A."/>
            <person name="Brennan T."/>
            <person name="Carpenter J."/>
            <person name="Chen E."/>
            <person name="Cherry J.M."/>
            <person name="Chung E."/>
            <person name="Duncan M."/>
            <person name="Guzman E."/>
            <person name="Hartzell G."/>
            <person name="Hunicke-Smith S."/>
            <person name="Hyman R.W."/>
            <person name="Kayser A."/>
            <person name="Komp C."/>
            <person name="Lashkari D."/>
            <person name="Lew H."/>
            <person name="Lin D."/>
            <person name="Mosedale D."/>
            <person name="Nakahara K."/>
            <person name="Namath A."/>
            <person name="Norgren R."/>
            <person name="Oefner P."/>
            <person name="Oh C."/>
            <person name="Petel F.X."/>
            <person name="Roberts D."/>
            <person name="Sehl P."/>
            <person name="Schramm S."/>
            <person name="Shogren T."/>
            <person name="Smith V."/>
            <person name="Taylor P."/>
            <person name="Wei Y."/>
            <person name="Botstein D."/>
            <person name="Davis R.W."/>
        </authorList>
    </citation>
    <scope>NUCLEOTIDE SEQUENCE [LARGE SCALE GENOMIC DNA]</scope>
    <source>
        <strain>ATCC 204508 / S288c</strain>
    </source>
</reference>
<reference key="2">
    <citation type="journal article" date="2014" name="G3 (Bethesda)">
        <title>The reference genome sequence of Saccharomyces cerevisiae: Then and now.</title>
        <authorList>
            <person name="Engel S.R."/>
            <person name="Dietrich F.S."/>
            <person name="Fisk D.G."/>
            <person name="Binkley G."/>
            <person name="Balakrishnan R."/>
            <person name="Costanzo M.C."/>
            <person name="Dwight S.S."/>
            <person name="Hitz B.C."/>
            <person name="Karra K."/>
            <person name="Nash R.S."/>
            <person name="Weng S."/>
            <person name="Wong E.D."/>
            <person name="Lloyd P."/>
            <person name="Skrzypek M.S."/>
            <person name="Miyasato S.R."/>
            <person name="Simison M."/>
            <person name="Cherry J.M."/>
        </authorList>
    </citation>
    <scope>GENOME REANNOTATION</scope>
    <source>
        <strain>ATCC 204508 / S288c</strain>
    </source>
</reference>
<reference key="3">
    <citation type="journal article" date="2002" name="Nature">
        <title>A large nucleolar U3 ribonucleoprotein required for 18S ribosomal RNA biogenesis.</title>
        <authorList>
            <person name="Dragon F."/>
            <person name="Gallagher J.E.G."/>
            <person name="Compagnone-Post P.A."/>
            <person name="Mitchell B.M."/>
            <person name="Porwancher K.A."/>
            <person name="Wehner K.A."/>
            <person name="Wormsley S."/>
            <person name="Settlage R.E."/>
            <person name="Shabanowitz J."/>
            <person name="Osheim Y."/>
            <person name="Beyer A.L."/>
            <person name="Hunt D.F."/>
            <person name="Baserga S.J."/>
        </authorList>
    </citation>
    <scope>FUNCTION</scope>
    <scope>INTERACTION WITH MPP10 AND SNORNA U3</scope>
    <scope>IDENTIFICATION IN SSU PROCESSOME BY MASS SPECTROMETRY</scope>
    <scope>SUBCELLULAR LOCATION</scope>
</reference>
<reference key="4">
    <citation type="journal article" date="2003" name="Nature">
        <title>Global analysis of protein expression in yeast.</title>
        <authorList>
            <person name="Ghaemmaghami S."/>
            <person name="Huh W.-K."/>
            <person name="Bower K."/>
            <person name="Howson R.W."/>
            <person name="Belle A."/>
            <person name="Dephoure N."/>
            <person name="O'Shea E.K."/>
            <person name="Weissman J.S."/>
        </authorList>
    </citation>
    <scope>LEVEL OF PROTEIN EXPRESSION [LARGE SCALE ANALYSIS]</scope>
</reference>
<gene>
    <name type="primary">UTP7</name>
    <name type="synonym">KRE31</name>
    <name type="ordered locus">YER082C</name>
</gene>
<organism>
    <name type="scientific">Saccharomyces cerevisiae (strain ATCC 204508 / S288c)</name>
    <name type="common">Baker's yeast</name>
    <dbReference type="NCBI Taxonomy" id="559292"/>
    <lineage>
        <taxon>Eukaryota</taxon>
        <taxon>Fungi</taxon>
        <taxon>Dikarya</taxon>
        <taxon>Ascomycota</taxon>
        <taxon>Saccharomycotina</taxon>
        <taxon>Saccharomycetes</taxon>
        <taxon>Saccharomycetales</taxon>
        <taxon>Saccharomycetaceae</taxon>
        <taxon>Saccharomyces</taxon>
    </lineage>
</organism>
<name>UTP7_YEAST</name>
<proteinExistence type="evidence at protein level"/>
<dbReference type="EMBL" id="U18839">
    <property type="protein sequence ID" value="AAB64637.1"/>
    <property type="molecule type" value="Genomic_DNA"/>
</dbReference>
<dbReference type="EMBL" id="BK006939">
    <property type="protein sequence ID" value="DAA07743.1"/>
    <property type="molecule type" value="Genomic_DNA"/>
</dbReference>
<dbReference type="PIR" id="S50585">
    <property type="entry name" value="S50585"/>
</dbReference>
<dbReference type="RefSeq" id="NP_011005.1">
    <property type="nucleotide sequence ID" value="NM_001178973.1"/>
</dbReference>
<dbReference type="PDB" id="5WLC">
    <property type="method" value="EM"/>
    <property type="resolution" value="3.80 A"/>
    <property type="chains" value="LW=1-554"/>
</dbReference>
<dbReference type="PDB" id="6KE6">
    <property type="method" value="EM"/>
    <property type="resolution" value="3.40 A"/>
    <property type="chains" value="5C=1-554"/>
</dbReference>
<dbReference type="PDB" id="6LQP">
    <property type="method" value="EM"/>
    <property type="resolution" value="3.20 A"/>
    <property type="chains" value="5C=1-554"/>
</dbReference>
<dbReference type="PDB" id="6LQQ">
    <property type="method" value="EM"/>
    <property type="resolution" value="4.10 A"/>
    <property type="chains" value="5C=1-554"/>
</dbReference>
<dbReference type="PDB" id="6LQR">
    <property type="method" value="EM"/>
    <property type="resolution" value="8.60 A"/>
    <property type="chains" value="5C=1-554"/>
</dbReference>
<dbReference type="PDB" id="6LQS">
    <property type="method" value="EM"/>
    <property type="resolution" value="3.80 A"/>
    <property type="chains" value="5C=1-554"/>
</dbReference>
<dbReference type="PDB" id="6LQT">
    <property type="method" value="EM"/>
    <property type="resolution" value="4.90 A"/>
    <property type="chains" value="5C=1-554"/>
</dbReference>
<dbReference type="PDB" id="6LQU">
    <property type="method" value="EM"/>
    <property type="resolution" value="3.70 A"/>
    <property type="chains" value="5C=1-554"/>
</dbReference>
<dbReference type="PDB" id="6LQV">
    <property type="method" value="EM"/>
    <property type="resolution" value="4.80 A"/>
    <property type="chains" value="5C=1-554"/>
</dbReference>
<dbReference type="PDB" id="6ND4">
    <property type="method" value="EM"/>
    <property type="resolution" value="4.30 A"/>
    <property type="chains" value="W=1-554"/>
</dbReference>
<dbReference type="PDB" id="6ZQA">
    <property type="method" value="EM"/>
    <property type="resolution" value="4.40 A"/>
    <property type="chains" value="UG=1-554"/>
</dbReference>
<dbReference type="PDB" id="6ZQB">
    <property type="method" value="EM"/>
    <property type="resolution" value="3.90 A"/>
    <property type="chains" value="UG=1-554"/>
</dbReference>
<dbReference type="PDB" id="6ZQC">
    <property type="method" value="EM"/>
    <property type="resolution" value="3.80 A"/>
    <property type="chains" value="UG=1-554"/>
</dbReference>
<dbReference type="PDB" id="6ZQD">
    <property type="method" value="EM"/>
    <property type="resolution" value="3.80 A"/>
    <property type="chains" value="UG=1-554"/>
</dbReference>
<dbReference type="PDB" id="7AJT">
    <property type="method" value="EM"/>
    <property type="resolution" value="4.60 A"/>
    <property type="chains" value="UG=1-554"/>
</dbReference>
<dbReference type="PDB" id="7AJU">
    <property type="method" value="EM"/>
    <property type="resolution" value="3.80 A"/>
    <property type="chains" value="UG=1-554"/>
</dbReference>
<dbReference type="PDB" id="7D4I">
    <property type="method" value="EM"/>
    <property type="resolution" value="4.00 A"/>
    <property type="chains" value="5C=1-554"/>
</dbReference>
<dbReference type="PDB" id="7D5S">
    <property type="method" value="EM"/>
    <property type="resolution" value="4.60 A"/>
    <property type="chains" value="5C=1-554"/>
</dbReference>
<dbReference type="PDB" id="7D5T">
    <property type="method" value="EM"/>
    <property type="resolution" value="6.00 A"/>
    <property type="chains" value="5C=1-554"/>
</dbReference>
<dbReference type="PDB" id="7D63">
    <property type="method" value="EM"/>
    <property type="resolution" value="12.30 A"/>
    <property type="chains" value="5C=1-554"/>
</dbReference>
<dbReference type="PDB" id="7SUK">
    <property type="method" value="EM"/>
    <property type="resolution" value="3.99 A"/>
    <property type="chains" value="LW=36-473"/>
</dbReference>
<dbReference type="PDBsum" id="5WLC"/>
<dbReference type="PDBsum" id="6KE6"/>
<dbReference type="PDBsum" id="6LQP"/>
<dbReference type="PDBsum" id="6LQQ"/>
<dbReference type="PDBsum" id="6LQR"/>
<dbReference type="PDBsum" id="6LQS"/>
<dbReference type="PDBsum" id="6LQT"/>
<dbReference type="PDBsum" id="6LQU"/>
<dbReference type="PDBsum" id="6LQV"/>
<dbReference type="PDBsum" id="6ND4"/>
<dbReference type="PDBsum" id="6ZQA"/>
<dbReference type="PDBsum" id="6ZQB"/>
<dbReference type="PDBsum" id="6ZQC"/>
<dbReference type="PDBsum" id="6ZQD"/>
<dbReference type="PDBsum" id="7AJT"/>
<dbReference type="PDBsum" id="7AJU"/>
<dbReference type="PDBsum" id="7D4I"/>
<dbReference type="PDBsum" id="7D5S"/>
<dbReference type="PDBsum" id="7D5T"/>
<dbReference type="PDBsum" id="7D63"/>
<dbReference type="PDBsum" id="7SUK"/>
<dbReference type="EMDB" id="EMD-0441"/>
<dbReference type="EMDB" id="EMD-0949"/>
<dbReference type="EMDB" id="EMD-0950"/>
<dbReference type="EMDB" id="EMD-0951"/>
<dbReference type="EMDB" id="EMD-0952"/>
<dbReference type="EMDB" id="EMD-0953"/>
<dbReference type="EMDB" id="EMD-0954"/>
<dbReference type="EMDB" id="EMD-0955"/>
<dbReference type="EMDB" id="EMD-11357"/>
<dbReference type="EMDB" id="EMD-11358"/>
<dbReference type="EMDB" id="EMD-11359"/>
<dbReference type="EMDB" id="EMD-11360"/>
<dbReference type="EMDB" id="EMD-11807"/>
<dbReference type="EMDB" id="EMD-11808"/>
<dbReference type="EMDB" id="EMD-25441"/>
<dbReference type="EMDB" id="EMD-30574"/>
<dbReference type="EMDB" id="EMD-30584"/>
<dbReference type="EMDB" id="EMD-30585"/>
<dbReference type="EMDB" id="EMD-30588"/>
<dbReference type="EMDB" id="EMD-8859"/>
<dbReference type="EMDB" id="EMD-9964"/>
<dbReference type="SMR" id="P40055"/>
<dbReference type="BioGRID" id="36827">
    <property type="interactions" value="315"/>
</dbReference>
<dbReference type="ComplexPortal" id="CPX-1604">
    <property type="entry name" value="Small ribosomal subunit processome"/>
</dbReference>
<dbReference type="DIP" id="DIP-5398N"/>
<dbReference type="FunCoup" id="P40055">
    <property type="interactions" value="1324"/>
</dbReference>
<dbReference type="IntAct" id="P40055">
    <property type="interactions" value="123"/>
</dbReference>
<dbReference type="MINT" id="P40055"/>
<dbReference type="STRING" id="4932.YER082C"/>
<dbReference type="GlyGen" id="P40055">
    <property type="glycosylation" value="2 sites"/>
</dbReference>
<dbReference type="iPTMnet" id="P40055"/>
<dbReference type="PaxDb" id="4932-YER082C"/>
<dbReference type="PeptideAtlas" id="P40055"/>
<dbReference type="EnsemblFungi" id="YER082C_mRNA">
    <property type="protein sequence ID" value="YER082C"/>
    <property type="gene ID" value="YER082C"/>
</dbReference>
<dbReference type="GeneID" id="856815"/>
<dbReference type="KEGG" id="sce:YER082C"/>
<dbReference type="AGR" id="SGD:S000000884"/>
<dbReference type="SGD" id="S000000884">
    <property type="gene designation" value="UTP7"/>
</dbReference>
<dbReference type="VEuPathDB" id="FungiDB:YER082C"/>
<dbReference type="eggNOG" id="KOG1272">
    <property type="taxonomic scope" value="Eukaryota"/>
</dbReference>
<dbReference type="GeneTree" id="ENSGT00390000007075"/>
<dbReference type="HOGENOM" id="CLU_022996_1_1_1"/>
<dbReference type="InParanoid" id="P40055"/>
<dbReference type="OMA" id="EFLPYHW"/>
<dbReference type="OrthoDB" id="10251154at2759"/>
<dbReference type="BioCyc" id="YEAST:G3O-30252-MONOMER"/>
<dbReference type="Reactome" id="R-SCE-6791226">
    <property type="pathway name" value="Major pathway of rRNA processing in the nucleolus and cytosol"/>
</dbReference>
<dbReference type="BioGRID-ORCS" id="856815">
    <property type="hits" value="10 hits in 10 CRISPR screens"/>
</dbReference>
<dbReference type="CD-CODE" id="BDAE0F88">
    <property type="entry name" value="Nucleolus"/>
</dbReference>
<dbReference type="PRO" id="PR:P40055"/>
<dbReference type="Proteomes" id="UP000002311">
    <property type="component" value="Chromosome V"/>
</dbReference>
<dbReference type="RNAct" id="P40055">
    <property type="molecule type" value="protein"/>
</dbReference>
<dbReference type="GO" id="GO:0030686">
    <property type="term" value="C:90S preribosome"/>
    <property type="evidence" value="ECO:0007005"/>
    <property type="project" value="SGD"/>
</dbReference>
<dbReference type="GO" id="GO:0005730">
    <property type="term" value="C:nucleolus"/>
    <property type="evidence" value="ECO:0000314"/>
    <property type="project" value="SGD"/>
</dbReference>
<dbReference type="GO" id="GO:0005654">
    <property type="term" value="C:nucleoplasm"/>
    <property type="evidence" value="ECO:0000304"/>
    <property type="project" value="Reactome"/>
</dbReference>
<dbReference type="GO" id="GO:0030688">
    <property type="term" value="C:preribosome, small subunit precursor"/>
    <property type="evidence" value="ECO:0000314"/>
    <property type="project" value="GO_Central"/>
</dbReference>
<dbReference type="GO" id="GO:0032040">
    <property type="term" value="C:small-subunit processome"/>
    <property type="evidence" value="ECO:0000314"/>
    <property type="project" value="SGD"/>
</dbReference>
<dbReference type="GO" id="GO:0000480">
    <property type="term" value="P:endonucleolytic cleavage in 5'-ETS of tricistronic rRNA transcript (SSU-rRNA, 5.8S rRNA, LSU-rRNA)"/>
    <property type="evidence" value="ECO:0000315"/>
    <property type="project" value="SGD"/>
</dbReference>
<dbReference type="GO" id="GO:0000447">
    <property type="term" value="P:endonucleolytic cleavage in ITS1 to separate SSU-rRNA from 5.8S rRNA and LSU-rRNA from tricistronic rRNA transcript (SSU-rRNA, 5.8S rRNA, LSU-rRNA)"/>
    <property type="evidence" value="ECO:0000315"/>
    <property type="project" value="SGD"/>
</dbReference>
<dbReference type="GO" id="GO:0000472">
    <property type="term" value="P:endonucleolytic cleavage to generate mature 5'-end of SSU-rRNA from (SSU-rRNA, 5.8S rRNA, LSU-rRNA)"/>
    <property type="evidence" value="ECO:0000315"/>
    <property type="project" value="SGD"/>
</dbReference>
<dbReference type="GO" id="GO:0030490">
    <property type="term" value="P:maturation of SSU-rRNA"/>
    <property type="evidence" value="ECO:0000303"/>
    <property type="project" value="ComplexPortal"/>
</dbReference>
<dbReference type="GO" id="GO:0000462">
    <property type="term" value="P:maturation of SSU-rRNA from tricistronic rRNA transcript (SSU-rRNA, 5.8S rRNA, LSU-rRNA)"/>
    <property type="evidence" value="ECO:0000315"/>
    <property type="project" value="SGD"/>
</dbReference>
<dbReference type="FunFam" id="2.130.10.10:FF:000378">
    <property type="entry name" value="U3 small nucleolar RNA-associated protein 7"/>
    <property type="match status" value="1"/>
</dbReference>
<dbReference type="Gene3D" id="2.130.10.10">
    <property type="entry name" value="YVTN repeat-like/Quinoprotein amine dehydrogenase"/>
    <property type="match status" value="2"/>
</dbReference>
<dbReference type="InterPro" id="IPR012952">
    <property type="entry name" value="BING4_C_dom"/>
</dbReference>
<dbReference type="InterPro" id="IPR015943">
    <property type="entry name" value="WD40/YVTN_repeat-like_dom_sf"/>
</dbReference>
<dbReference type="InterPro" id="IPR019775">
    <property type="entry name" value="WD40_repeat_CS"/>
</dbReference>
<dbReference type="InterPro" id="IPR036322">
    <property type="entry name" value="WD40_repeat_dom_sf"/>
</dbReference>
<dbReference type="InterPro" id="IPR001680">
    <property type="entry name" value="WD40_rpt"/>
</dbReference>
<dbReference type="InterPro" id="IPR040315">
    <property type="entry name" value="WDR46/Utp7"/>
</dbReference>
<dbReference type="PANTHER" id="PTHR14085:SF3">
    <property type="entry name" value="WD REPEAT-CONTAINING PROTEIN 46"/>
    <property type="match status" value="1"/>
</dbReference>
<dbReference type="PANTHER" id="PTHR14085">
    <property type="entry name" value="WD-REPEAT PROTEIN BING4"/>
    <property type="match status" value="1"/>
</dbReference>
<dbReference type="Pfam" id="PF08149">
    <property type="entry name" value="BING4CT"/>
    <property type="match status" value="1"/>
</dbReference>
<dbReference type="Pfam" id="PF00400">
    <property type="entry name" value="WD40"/>
    <property type="match status" value="1"/>
</dbReference>
<dbReference type="SMART" id="SM01033">
    <property type="entry name" value="BING4CT"/>
    <property type="match status" value="1"/>
</dbReference>
<dbReference type="SMART" id="SM00320">
    <property type="entry name" value="WD40"/>
    <property type="match status" value="3"/>
</dbReference>
<dbReference type="SUPFAM" id="SSF50978">
    <property type="entry name" value="WD40 repeat-like"/>
    <property type="match status" value="1"/>
</dbReference>
<dbReference type="PROSITE" id="PS00678">
    <property type="entry name" value="WD_REPEATS_1"/>
    <property type="match status" value="1"/>
</dbReference>
<dbReference type="PROSITE" id="PS50082">
    <property type="entry name" value="WD_REPEATS_2"/>
    <property type="match status" value="1"/>
</dbReference>
<dbReference type="PROSITE" id="PS50294">
    <property type="entry name" value="WD_REPEATS_REGION"/>
    <property type="match status" value="1"/>
</dbReference>
<keyword id="KW-0002">3D-structure</keyword>
<keyword id="KW-0539">Nucleus</keyword>
<keyword id="KW-1185">Reference proteome</keyword>
<keyword id="KW-0677">Repeat</keyword>
<keyword id="KW-0687">Ribonucleoprotein</keyword>
<keyword id="KW-0690">Ribosome biogenesis</keyword>
<keyword id="KW-0698">rRNA processing</keyword>
<keyword id="KW-0853">WD repeat</keyword>
<feature type="chain" id="PRO_0000051319" description="U3 small nucleolar RNA-associated protein 7">
    <location>
        <begin position="1"/>
        <end position="554"/>
    </location>
</feature>
<feature type="repeat" description="WD 1">
    <location>
        <begin position="108"/>
        <end position="149"/>
    </location>
</feature>
<feature type="repeat" description="WD 2">
    <location>
        <begin position="230"/>
        <end position="269"/>
    </location>
</feature>
<feature type="repeat" description="WD 3">
    <location>
        <begin position="272"/>
        <end position="311"/>
    </location>
</feature>
<feature type="repeat" description="WD 4">
    <location>
        <begin position="314"/>
        <end position="351"/>
    </location>
</feature>
<feature type="region of interest" description="Disordered" evidence="1">
    <location>
        <begin position="1"/>
        <end position="39"/>
    </location>
</feature>
<feature type="region of interest" description="Disordered" evidence="1">
    <location>
        <begin position="475"/>
        <end position="496"/>
    </location>
</feature>
<feature type="compositionally biased region" description="Basic residues" evidence="1">
    <location>
        <begin position="1"/>
        <end position="12"/>
    </location>
</feature>
<feature type="compositionally biased region" description="Basic and acidic residues" evidence="1">
    <location>
        <begin position="13"/>
        <end position="23"/>
    </location>
</feature>
<feature type="compositionally biased region" description="Polar residues" evidence="1">
    <location>
        <begin position="24"/>
        <end position="35"/>
    </location>
</feature>
<protein>
    <recommendedName>
        <fullName>U3 small nucleolar RNA-associated protein 7</fullName>
        <shortName>U3 snoRNA-associated protein 7</shortName>
    </recommendedName>
    <alternativeName>
        <fullName>U three protein 7</fullName>
    </alternativeName>
</protein>
<accession>P40055</accession>
<accession>D3DLY9</accession>